<evidence type="ECO:0000255" key="1">
    <source>
        <dbReference type="HAMAP-Rule" id="MF_01901"/>
    </source>
</evidence>
<evidence type="ECO:0000305" key="2"/>
<protein>
    <recommendedName>
        <fullName evidence="1">Arginine exporter protein ArgO</fullName>
    </recommendedName>
</protein>
<name>ARGO_SALTY</name>
<proteinExistence type="inferred from homology"/>
<reference key="1">
    <citation type="journal article" date="2001" name="Nature">
        <title>Complete genome sequence of Salmonella enterica serovar Typhimurium LT2.</title>
        <authorList>
            <person name="McClelland M."/>
            <person name="Sanderson K.E."/>
            <person name="Spieth J."/>
            <person name="Clifton S.W."/>
            <person name="Latreille P."/>
            <person name="Courtney L."/>
            <person name="Porwollik S."/>
            <person name="Ali J."/>
            <person name="Dante M."/>
            <person name="Du F."/>
            <person name="Hou S."/>
            <person name="Layman D."/>
            <person name="Leonard S."/>
            <person name="Nguyen C."/>
            <person name="Scott K."/>
            <person name="Holmes A."/>
            <person name="Grewal N."/>
            <person name="Mulvaney E."/>
            <person name="Ryan E."/>
            <person name="Sun H."/>
            <person name="Florea L."/>
            <person name="Miller W."/>
            <person name="Stoneking T."/>
            <person name="Nhan M."/>
            <person name="Waterston R."/>
            <person name="Wilson R.K."/>
        </authorList>
    </citation>
    <scope>NUCLEOTIDE SEQUENCE [LARGE SCALE GENOMIC DNA]</scope>
    <source>
        <strain>LT2 / SGSC1412 / ATCC 700720</strain>
    </source>
</reference>
<accession>Q8ZM68</accession>
<gene>
    <name evidence="1" type="primary">argO</name>
    <name type="ordered locus">STM3066</name>
</gene>
<dbReference type="EMBL" id="AE006468">
    <property type="protein sequence ID" value="AAL21941.1"/>
    <property type="molecule type" value="Genomic_DNA"/>
</dbReference>
<dbReference type="RefSeq" id="WP_000626863.1">
    <property type="nucleotide sequence ID" value="NC_003197.2"/>
</dbReference>
<dbReference type="STRING" id="99287.STM3066"/>
<dbReference type="PaxDb" id="99287-STM3066"/>
<dbReference type="KEGG" id="stm:STM3066"/>
<dbReference type="PATRIC" id="fig|99287.12.peg.3249"/>
<dbReference type="HOGENOM" id="CLU_087840_0_1_6"/>
<dbReference type="OMA" id="HVFAVCL"/>
<dbReference type="PhylomeDB" id="Q8ZM68"/>
<dbReference type="BioCyc" id="SENT99287:STM3066-MONOMER"/>
<dbReference type="Proteomes" id="UP000001014">
    <property type="component" value="Chromosome"/>
</dbReference>
<dbReference type="GO" id="GO:0005886">
    <property type="term" value="C:plasma membrane"/>
    <property type="evidence" value="ECO:0000318"/>
    <property type="project" value="GO_Central"/>
</dbReference>
<dbReference type="GO" id="GO:0015171">
    <property type="term" value="F:amino acid transmembrane transporter activity"/>
    <property type="evidence" value="ECO:0000318"/>
    <property type="project" value="GO_Central"/>
</dbReference>
<dbReference type="GO" id="GO:0061459">
    <property type="term" value="F:L-arginine transmembrane transporter activity"/>
    <property type="evidence" value="ECO:0007669"/>
    <property type="project" value="UniProtKB-UniRule"/>
</dbReference>
<dbReference type="GO" id="GO:0006865">
    <property type="term" value="P:amino acid transport"/>
    <property type="evidence" value="ECO:0000318"/>
    <property type="project" value="GO_Central"/>
</dbReference>
<dbReference type="HAMAP" id="MF_01901">
    <property type="entry name" value="ArgO"/>
    <property type="match status" value="1"/>
</dbReference>
<dbReference type="InterPro" id="IPR023445">
    <property type="entry name" value="Arg_export_ArgO_enterobac"/>
</dbReference>
<dbReference type="InterPro" id="IPR001123">
    <property type="entry name" value="LeuE-type"/>
</dbReference>
<dbReference type="InterPro" id="IPR004777">
    <property type="entry name" value="Lys/arg_exporter"/>
</dbReference>
<dbReference type="NCBIfam" id="TIGR00948">
    <property type="entry name" value="2a75"/>
    <property type="match status" value="1"/>
</dbReference>
<dbReference type="NCBIfam" id="NF006801">
    <property type="entry name" value="PRK09304.1"/>
    <property type="match status" value="1"/>
</dbReference>
<dbReference type="PANTHER" id="PTHR30086">
    <property type="entry name" value="ARGININE EXPORTER PROTEIN ARGO"/>
    <property type="match status" value="1"/>
</dbReference>
<dbReference type="PANTHER" id="PTHR30086:SF20">
    <property type="entry name" value="ARGININE EXPORTER PROTEIN ARGO-RELATED"/>
    <property type="match status" value="1"/>
</dbReference>
<dbReference type="Pfam" id="PF01810">
    <property type="entry name" value="LysE"/>
    <property type="match status" value="1"/>
</dbReference>
<feature type="chain" id="PRO_0000204166" description="Arginine exporter protein ArgO">
    <location>
        <begin position="1"/>
        <end position="211"/>
    </location>
</feature>
<feature type="transmembrane region" description="Helical" evidence="1">
    <location>
        <begin position="1"/>
        <end position="21"/>
    </location>
</feature>
<feature type="transmembrane region" description="Helical" evidence="1">
    <location>
        <begin position="37"/>
        <end position="57"/>
    </location>
</feature>
<feature type="transmembrane region" description="Helical" evidence="1">
    <location>
        <begin position="68"/>
        <end position="88"/>
    </location>
</feature>
<feature type="transmembrane region" description="Helical" evidence="1">
    <location>
        <begin position="111"/>
        <end position="131"/>
    </location>
</feature>
<feature type="transmembrane region" description="Helical" evidence="1">
    <location>
        <begin position="147"/>
        <end position="167"/>
    </location>
</feature>
<feature type="transmembrane region" description="Helical" evidence="1">
    <location>
        <begin position="179"/>
        <end position="199"/>
    </location>
</feature>
<keyword id="KW-0029">Amino-acid transport</keyword>
<keyword id="KW-0997">Cell inner membrane</keyword>
<keyword id="KW-1003">Cell membrane</keyword>
<keyword id="KW-0472">Membrane</keyword>
<keyword id="KW-1185">Reference proteome</keyword>
<keyword id="KW-0812">Transmembrane</keyword>
<keyword id="KW-1133">Transmembrane helix</keyword>
<keyword id="KW-0813">Transport</keyword>
<organism>
    <name type="scientific">Salmonella typhimurium (strain LT2 / SGSC1412 / ATCC 700720)</name>
    <dbReference type="NCBI Taxonomy" id="99287"/>
    <lineage>
        <taxon>Bacteria</taxon>
        <taxon>Pseudomonadati</taxon>
        <taxon>Pseudomonadota</taxon>
        <taxon>Gammaproteobacteria</taxon>
        <taxon>Enterobacterales</taxon>
        <taxon>Enterobacteriaceae</taxon>
        <taxon>Salmonella</taxon>
    </lineage>
</organism>
<sequence>MISYYFQGFALGAAMILPLGPQNAFVMNQGIRRQYHLMIALLCALSDLVLISAGIFGGSALLMQSPWLLALVTWGGVAFLLWYGFGALKTAMSSNLELASAEVMKQGRWKIIATMLAVTWLNPHVYLDTFVVLGSLGGQLAMEPKRWFALGTISASFLWFFGLALLAAWLAPRLRTAKAQRIINILVGVVMWLIAFQLAREGVAHMHALFN</sequence>
<comment type="function">
    <text evidence="1">Involved in the export of arginine. Important to control the intracellular level of arginine and the correct balance between arginine and lysine.</text>
</comment>
<comment type="catalytic activity">
    <reaction evidence="1">
        <text>L-arginine(in) = L-arginine(out)</text>
        <dbReference type="Rhea" id="RHEA:32143"/>
        <dbReference type="ChEBI" id="CHEBI:32682"/>
    </reaction>
    <physiologicalReaction direction="left-to-right" evidence="1">
        <dbReference type="Rhea" id="RHEA:32144"/>
    </physiologicalReaction>
</comment>
<comment type="subcellular location">
    <subcellularLocation>
        <location evidence="1">Cell inner membrane</location>
        <topology evidence="1">Multi-pass membrane protein</topology>
    </subcellularLocation>
</comment>
<comment type="similarity">
    <text evidence="1 2">Belongs to the LysE/ArgO transporter (TC 2.A.75) family.</text>
</comment>